<accession>P0CQ05</accession>
<accession>Q55QH3</accession>
<accession>Q5KFP3</accession>
<protein>
    <recommendedName>
        <fullName>Plasma membrane fusion protein PRM1</fullName>
    </recommendedName>
</protein>
<organism>
    <name type="scientific">Cryptococcus neoformans var. neoformans serotype D (strain B-3501A)</name>
    <name type="common">Filobasidiella neoformans</name>
    <dbReference type="NCBI Taxonomy" id="283643"/>
    <lineage>
        <taxon>Eukaryota</taxon>
        <taxon>Fungi</taxon>
        <taxon>Dikarya</taxon>
        <taxon>Basidiomycota</taxon>
        <taxon>Agaricomycotina</taxon>
        <taxon>Tremellomycetes</taxon>
        <taxon>Tremellales</taxon>
        <taxon>Cryptococcaceae</taxon>
        <taxon>Cryptococcus</taxon>
        <taxon>Cryptococcus neoformans species complex</taxon>
    </lineage>
</organism>
<evidence type="ECO:0000250" key="1"/>
<evidence type="ECO:0000255" key="2"/>
<evidence type="ECO:0000256" key="3">
    <source>
        <dbReference type="SAM" id="MobiDB-lite"/>
    </source>
</evidence>
<evidence type="ECO:0000305" key="4"/>
<proteinExistence type="inferred from homology"/>
<feature type="chain" id="PRO_0000410212" description="Plasma membrane fusion protein PRM1">
    <location>
        <begin position="1"/>
        <end position="1076"/>
    </location>
</feature>
<feature type="topological domain" description="Extracellular" evidence="1">
    <location>
        <begin position="1"/>
        <end position="66"/>
    </location>
</feature>
<feature type="transmembrane region" description="Helical" evidence="2">
    <location>
        <begin position="67"/>
        <end position="87"/>
    </location>
</feature>
<feature type="topological domain" description="Cytoplasmic" evidence="1">
    <location>
        <begin position="88"/>
        <end position="138"/>
    </location>
</feature>
<feature type="transmembrane region" description="Helical" evidence="2">
    <location>
        <begin position="139"/>
        <end position="159"/>
    </location>
</feature>
<feature type="topological domain" description="Extracellular" evidence="1">
    <location>
        <begin position="160"/>
        <end position="350"/>
    </location>
</feature>
<feature type="transmembrane region" description="Helical" evidence="2">
    <location>
        <begin position="351"/>
        <end position="371"/>
    </location>
</feature>
<feature type="topological domain" description="Cytoplasmic" evidence="1">
    <location>
        <begin position="372"/>
        <end position="432"/>
    </location>
</feature>
<feature type="transmembrane region" description="Helical" evidence="2">
    <location>
        <begin position="433"/>
        <end position="455"/>
    </location>
</feature>
<feature type="topological domain" description="Extracellular" evidence="1">
    <location>
        <begin position="456"/>
        <end position="646"/>
    </location>
</feature>
<feature type="transmembrane region" description="Helical" evidence="2">
    <location>
        <begin position="647"/>
        <end position="667"/>
    </location>
</feature>
<feature type="topological domain" description="Cytoplasmic" evidence="1">
    <location>
        <begin position="668"/>
        <end position="1076"/>
    </location>
</feature>
<feature type="region of interest" description="Disordered" evidence="3">
    <location>
        <begin position="1"/>
        <end position="31"/>
    </location>
</feature>
<feature type="region of interest" description="Disordered" evidence="3">
    <location>
        <begin position="796"/>
        <end position="835"/>
    </location>
</feature>
<feature type="region of interest" description="Disordered" evidence="3">
    <location>
        <begin position="874"/>
        <end position="908"/>
    </location>
</feature>
<feature type="region of interest" description="Disordered" evidence="3">
    <location>
        <begin position="949"/>
        <end position="1020"/>
    </location>
</feature>
<feature type="region of interest" description="Disordered" evidence="3">
    <location>
        <begin position="1057"/>
        <end position="1076"/>
    </location>
</feature>
<feature type="compositionally biased region" description="Polar residues" evidence="3">
    <location>
        <begin position="874"/>
        <end position="886"/>
    </location>
</feature>
<feature type="compositionally biased region" description="Basic and acidic residues" evidence="3">
    <location>
        <begin position="997"/>
        <end position="1010"/>
    </location>
</feature>
<feature type="glycosylation site" description="N-linked (GlcNAc...) asparagine" evidence="2">
    <location>
        <position position="235"/>
    </location>
</feature>
<feature type="glycosylation site" description="N-linked (GlcNAc...) asparagine" evidence="2">
    <location>
        <position position="251"/>
    </location>
</feature>
<feature type="glycosylation site" description="N-linked (GlcNAc...) asparagine" evidence="2">
    <location>
        <position position="266"/>
    </location>
</feature>
<feature type="glycosylation site" description="N-linked (GlcNAc...) asparagine" evidence="2">
    <location>
        <position position="295"/>
    </location>
</feature>
<feature type="glycosylation site" description="N-linked (GlcNAc...) asparagine" evidence="2">
    <location>
        <position position="306"/>
    </location>
</feature>
<feature type="glycosylation site" description="N-linked (GlcNAc...) asparagine" evidence="2">
    <location>
        <position position="476"/>
    </location>
</feature>
<feature type="glycosylation site" description="N-linked (GlcNAc...) asparagine" evidence="2">
    <location>
        <position position="496"/>
    </location>
</feature>
<feature type="glycosylation site" description="N-linked (GlcNAc...) asparagine" evidence="2">
    <location>
        <position position="526"/>
    </location>
</feature>
<feature type="glycosylation site" description="N-linked (GlcNAc...) asparagine" evidence="2">
    <location>
        <position position="533"/>
    </location>
</feature>
<feature type="glycosylation site" description="N-linked (GlcNAc...) asparagine" evidence="2">
    <location>
        <position position="548"/>
    </location>
</feature>
<feature type="glycosylation site" description="N-linked (GlcNAc...) asparagine" evidence="2">
    <location>
        <position position="602"/>
    </location>
</feature>
<reference key="1">
    <citation type="journal article" date="2005" name="Science">
        <title>The genome of the basidiomycetous yeast and human pathogen Cryptococcus neoformans.</title>
        <authorList>
            <person name="Loftus B.J."/>
            <person name="Fung E."/>
            <person name="Roncaglia P."/>
            <person name="Rowley D."/>
            <person name="Amedeo P."/>
            <person name="Bruno D."/>
            <person name="Vamathevan J."/>
            <person name="Miranda M."/>
            <person name="Anderson I.J."/>
            <person name="Fraser J.A."/>
            <person name="Allen J.E."/>
            <person name="Bosdet I.E."/>
            <person name="Brent M.R."/>
            <person name="Chiu R."/>
            <person name="Doering T.L."/>
            <person name="Donlin M.J."/>
            <person name="D'Souza C.A."/>
            <person name="Fox D.S."/>
            <person name="Grinberg V."/>
            <person name="Fu J."/>
            <person name="Fukushima M."/>
            <person name="Haas B.J."/>
            <person name="Huang J.C."/>
            <person name="Janbon G."/>
            <person name="Jones S.J.M."/>
            <person name="Koo H.L."/>
            <person name="Krzywinski M.I."/>
            <person name="Kwon-Chung K.J."/>
            <person name="Lengeler K.B."/>
            <person name="Maiti R."/>
            <person name="Marra M.A."/>
            <person name="Marra R.E."/>
            <person name="Mathewson C.A."/>
            <person name="Mitchell T.G."/>
            <person name="Pertea M."/>
            <person name="Riggs F.R."/>
            <person name="Salzberg S.L."/>
            <person name="Schein J.E."/>
            <person name="Shvartsbeyn A."/>
            <person name="Shin H."/>
            <person name="Shumway M."/>
            <person name="Specht C.A."/>
            <person name="Suh B.B."/>
            <person name="Tenney A."/>
            <person name="Utterback T.R."/>
            <person name="Wickes B.L."/>
            <person name="Wortman J.R."/>
            <person name="Wye N.H."/>
            <person name="Kronstad J.W."/>
            <person name="Lodge J.K."/>
            <person name="Heitman J."/>
            <person name="Davis R.W."/>
            <person name="Fraser C.M."/>
            <person name="Hyman R.W."/>
        </authorList>
    </citation>
    <scope>NUCLEOTIDE SEQUENCE [LARGE SCALE GENOMIC DNA]</scope>
    <source>
        <strain>B-3501A</strain>
    </source>
</reference>
<gene>
    <name type="primary">PRM1</name>
    <name type="ordered locus">CNBF3640</name>
</gene>
<name>PRM1_CRYNB</name>
<keyword id="KW-1003">Cell membrane</keyword>
<keyword id="KW-0184">Conjugation</keyword>
<keyword id="KW-0325">Glycoprotein</keyword>
<keyword id="KW-0472">Membrane</keyword>
<keyword id="KW-0812">Transmembrane</keyword>
<keyword id="KW-1133">Transmembrane helix</keyword>
<dbReference type="EMBL" id="AAEY01000032">
    <property type="protein sequence ID" value="EAL20038.1"/>
    <property type="molecule type" value="Genomic_DNA"/>
</dbReference>
<dbReference type="RefSeq" id="XP_774685.1">
    <property type="nucleotide sequence ID" value="XM_769592.1"/>
</dbReference>
<dbReference type="GlyCosmos" id="P0CQ05">
    <property type="glycosylation" value="11 sites, No reported glycans"/>
</dbReference>
<dbReference type="GeneID" id="4936916"/>
<dbReference type="KEGG" id="cnb:CNBF3640"/>
<dbReference type="VEuPathDB" id="FungiDB:CNBF3640"/>
<dbReference type="HOGENOM" id="CLU_320542_0_0_1"/>
<dbReference type="OrthoDB" id="8218at5206"/>
<dbReference type="GO" id="GO:0043332">
    <property type="term" value="C:mating projection tip"/>
    <property type="evidence" value="ECO:0007669"/>
    <property type="project" value="InterPro"/>
</dbReference>
<dbReference type="GO" id="GO:0005886">
    <property type="term" value="C:plasma membrane"/>
    <property type="evidence" value="ECO:0007669"/>
    <property type="project" value="UniProtKB-SubCell"/>
</dbReference>
<dbReference type="GO" id="GO:0032220">
    <property type="term" value="P:plasma membrane fusion involved in cytogamy"/>
    <property type="evidence" value="ECO:0007669"/>
    <property type="project" value="TreeGrafter"/>
</dbReference>
<dbReference type="InterPro" id="IPR026777">
    <property type="entry name" value="PRM1"/>
</dbReference>
<dbReference type="PANTHER" id="PTHR31030">
    <property type="entry name" value="PLASMA MEMBRANE FUSION PROTEIN PRM1"/>
    <property type="match status" value="1"/>
</dbReference>
<dbReference type="PANTHER" id="PTHR31030:SF1">
    <property type="entry name" value="PLASMA MEMBRANE FUSION PROTEIN PRM1"/>
    <property type="match status" value="1"/>
</dbReference>
<sequence>MSYPQAPSKFVNPDEIIPLSPPTKPPFAQYAASPLPATPHTPYSPPSPSRLSETIPLRPYLSLLPRILLTFFSPCLLPMILTIAHLIQNRSSTASLATSLKSSVLSACSGLAKGAASIKTLPRYLAMQTNQEAIRATQASILAIGTMLMDAITIIEVVVNFIVDTYRSLLLCTIELAVRGTLEILISAVQTISDAVTDTLNSVRSNIQDDIGDANDIIQTAVSAINRVTTLVNLNISVPEFSIPALSFLQNVTIPTTFEDGLITLNSSLPTLTDLKKKMDEIIDTPFEALISEINSTRLEMAASFNSSILSVPSLSSLSANSAKDLSNDLCSDLDTSLIDDTAKALHKLSSIAIGLMFLLLFLIWAALAVWEWRKWKLMKDTVDAVNEEWDRDGKSDAWRMVAIVEHPVLERYSGTFLGKIAKMPRTRTNLRWFLSYLAHPTCLALLFISLFGFLSIQFQLVALNALKAHAQSSANSTVTASTNSLVTKLNAAALNSSQEYADSYNEAIAGYQDRINNELFGSWVNTTAITLNSTLVEFYDEVEKALNASFGGTILYNPINTFMYCILGSKITNLEKGLTWISEHAFVDLPTFPSDILLLSNDSMNEIATPIAAAAVGSGDGGDDDDGVVGTLISHFESALKVERTFYGIMLGVWLALFLIGLAVVIWNSGGRENFMALRGVPSSSSPPGYGPPESKHPRWKAWLTNNHPIYDSYAEKQFRGTTPTNCLESYTHADVPNVNNGNDDHEKSFFKMRDSHAAGPFGSHATSAVRSTIASLAAPGQSFLKLSGRKLTDTTTPYDDKVPLAPVQTSEKYSRDHANSPFPRPSSESSESSAAQPFWVDKFYGAFEGVKSFFPTRSQRLGAALARKASQRTEGSFGASQVPTARTPGHDWIGGHQCPPEKKAEPEWSMVDPRMLGRALEDDKGRYPRVLPPSEMAAANYNPHPVYPRPMSRAPTLGEGMVIPSTTSHPDPFQDMPPLPPKHKRASMDYVEEYESSHSRSSREDSRHGGVTSPASSSVSYFAAEPQLVSASKVQVGVAQKGGQATRALAEIVKELQEKRERKDPFGDDYERGL</sequence>
<comment type="function">
    <text evidence="1">Involved in cell fusion during mating by stabilizing the plasma membrane fusion event.</text>
</comment>
<comment type="subcellular location">
    <subcellularLocation>
        <location evidence="1">Cell membrane</location>
        <topology evidence="1">Multi-pass membrane protein</topology>
    </subcellularLocation>
</comment>
<comment type="similarity">
    <text evidence="4">Belongs to the PRM1 family.</text>
</comment>